<protein>
    <recommendedName>
        <fullName evidence="1">ATP synthase subunit beta 1</fullName>
        <ecNumber evidence="1">7.1.2.2</ecNumber>
    </recommendedName>
    <alternativeName>
        <fullName evidence="1">ATP synthase F1 sector subunit beta 1</fullName>
    </alternativeName>
    <alternativeName>
        <fullName evidence="1">F-ATPase subunit beta 1</fullName>
    </alternativeName>
</protein>
<accession>Q15SF7</accession>
<evidence type="ECO:0000255" key="1">
    <source>
        <dbReference type="HAMAP-Rule" id="MF_01347"/>
    </source>
</evidence>
<evidence type="ECO:0000256" key="2">
    <source>
        <dbReference type="SAM" id="MobiDB-lite"/>
    </source>
</evidence>
<keyword id="KW-0066">ATP synthesis</keyword>
<keyword id="KW-0067">ATP-binding</keyword>
<keyword id="KW-0997">Cell inner membrane</keyword>
<keyword id="KW-1003">Cell membrane</keyword>
<keyword id="KW-0139">CF(1)</keyword>
<keyword id="KW-0375">Hydrogen ion transport</keyword>
<keyword id="KW-0406">Ion transport</keyword>
<keyword id="KW-0472">Membrane</keyword>
<keyword id="KW-0547">Nucleotide-binding</keyword>
<keyword id="KW-1278">Translocase</keyword>
<keyword id="KW-0813">Transport</keyword>
<reference key="1">
    <citation type="submission" date="2006-06" db="EMBL/GenBank/DDBJ databases">
        <title>Complete sequence of Pseudoalteromonas atlantica T6c.</title>
        <authorList>
            <consortium name="US DOE Joint Genome Institute"/>
            <person name="Copeland A."/>
            <person name="Lucas S."/>
            <person name="Lapidus A."/>
            <person name="Barry K."/>
            <person name="Detter J.C."/>
            <person name="Glavina del Rio T."/>
            <person name="Hammon N."/>
            <person name="Israni S."/>
            <person name="Dalin E."/>
            <person name="Tice H."/>
            <person name="Pitluck S."/>
            <person name="Saunders E."/>
            <person name="Brettin T."/>
            <person name="Bruce D."/>
            <person name="Han C."/>
            <person name="Tapia R."/>
            <person name="Gilna P."/>
            <person name="Schmutz J."/>
            <person name="Larimer F."/>
            <person name="Land M."/>
            <person name="Hauser L."/>
            <person name="Kyrpides N."/>
            <person name="Kim E."/>
            <person name="Karls A.C."/>
            <person name="Bartlett D."/>
            <person name="Higgins B.P."/>
            <person name="Richardson P."/>
        </authorList>
    </citation>
    <scope>NUCLEOTIDE SEQUENCE [LARGE SCALE GENOMIC DNA]</scope>
    <source>
        <strain>T6c / ATCC BAA-1087</strain>
    </source>
</reference>
<gene>
    <name evidence="1" type="primary">atpD1</name>
    <name type="ordered locus">Patl_2668</name>
</gene>
<name>ATPB1_PSEA6</name>
<feature type="chain" id="PRO_0000339574" description="ATP synthase subunit beta 1">
    <location>
        <begin position="1"/>
        <end position="537"/>
    </location>
</feature>
<feature type="region of interest" description="Disordered" evidence="2">
    <location>
        <begin position="471"/>
        <end position="537"/>
    </location>
</feature>
<feature type="compositionally biased region" description="Polar residues" evidence="2">
    <location>
        <begin position="473"/>
        <end position="498"/>
    </location>
</feature>
<feature type="compositionally biased region" description="Polar residues" evidence="2">
    <location>
        <begin position="507"/>
        <end position="528"/>
    </location>
</feature>
<feature type="binding site" evidence="1">
    <location>
        <begin position="164"/>
        <end position="171"/>
    </location>
    <ligand>
        <name>ATP</name>
        <dbReference type="ChEBI" id="CHEBI:30616"/>
    </ligand>
</feature>
<organism>
    <name type="scientific">Pseudoalteromonas atlantica (strain T6c / ATCC BAA-1087)</name>
    <dbReference type="NCBI Taxonomy" id="3042615"/>
    <lineage>
        <taxon>Bacteria</taxon>
        <taxon>Pseudomonadati</taxon>
        <taxon>Pseudomonadota</taxon>
        <taxon>Gammaproteobacteria</taxon>
        <taxon>Alteromonadales</taxon>
        <taxon>Alteromonadaceae</taxon>
        <taxon>Paraglaciecola</taxon>
    </lineage>
</organism>
<proteinExistence type="inferred from homology"/>
<sequence length="537" mass="58762">MSNVSTSVTAQYQLNPAQNTGLVAAVRGSIVDLIFEQHVPPIHNVLYAQNKHVVLEVVAQLSAQKIRTIALTATQGLARGMPVEDSGGPLKVPVGPSTLSRMFNVFGAPIDGHTYQHDGKWRSVHQAPPALTKISSQLQIFETGIKIVDVLCPLERGGKAGLFGGAGVGKTVLLSEMIHNMVSQQQGVSIFCGIGERCREGEELYREMKEAGVLDNMVMLFGQMNEPPGSRFRIGHAALTMAEYFRDDEKKDVLLLIDNIFRFIQAGSEVSGLMGQMPSRMGYQPTLGTELAGLEERIANTEDGAVTSIQAVYVPADDFTDPAAVHTFSHLSATLVLSRKRASEGFYPAVDPLQSSSKLATPTVVGQRHYDVARQVKQILAQYNELKDIIAMLGLEQLSKKDRDVVSRARRLERFFTQPFFTTEQFTSMKGKFVSLEQALTGCERILQGEFDDYPESALYMIGEIDEAIKPKQSATEKNSSMNSDLKPSNSESNSPGPKNSEPDNAIPSSAKPNVSQPNTFKQDAQNESLEEPQNGR</sequence>
<comment type="function">
    <text evidence="1">Produces ATP from ADP in the presence of a proton gradient across the membrane. The catalytic sites are hosted primarily by the beta subunits.</text>
</comment>
<comment type="catalytic activity">
    <reaction evidence="1">
        <text>ATP + H2O + 4 H(+)(in) = ADP + phosphate + 5 H(+)(out)</text>
        <dbReference type="Rhea" id="RHEA:57720"/>
        <dbReference type="ChEBI" id="CHEBI:15377"/>
        <dbReference type="ChEBI" id="CHEBI:15378"/>
        <dbReference type="ChEBI" id="CHEBI:30616"/>
        <dbReference type="ChEBI" id="CHEBI:43474"/>
        <dbReference type="ChEBI" id="CHEBI:456216"/>
        <dbReference type="EC" id="7.1.2.2"/>
    </reaction>
</comment>
<comment type="subunit">
    <text evidence="1">F-type ATPases have 2 components, CF(1) - the catalytic core - and CF(0) - the membrane proton channel. CF(1) has five subunits: alpha(3), beta(3), gamma(1), delta(1), epsilon(1). CF(0) has three main subunits: a(1), b(2) and c(9-12). The alpha and beta chains form an alternating ring which encloses part of the gamma chain. CF(1) is attached to CF(0) by a central stalk formed by the gamma and epsilon chains, while a peripheral stalk is formed by the delta and b chains.</text>
</comment>
<comment type="subcellular location">
    <subcellularLocation>
        <location evidence="1">Cell inner membrane</location>
        <topology evidence="1">Peripheral membrane protein</topology>
    </subcellularLocation>
</comment>
<comment type="similarity">
    <text evidence="1">Belongs to the ATPase alpha/beta chains family.</text>
</comment>
<dbReference type="EC" id="7.1.2.2" evidence="1"/>
<dbReference type="EMBL" id="CP000388">
    <property type="protein sequence ID" value="ABG41181.1"/>
    <property type="molecule type" value="Genomic_DNA"/>
</dbReference>
<dbReference type="RefSeq" id="WP_011575443.1">
    <property type="nucleotide sequence ID" value="NC_008228.1"/>
</dbReference>
<dbReference type="SMR" id="Q15SF7"/>
<dbReference type="STRING" id="342610.Patl_2668"/>
<dbReference type="KEGG" id="pat:Patl_2668"/>
<dbReference type="eggNOG" id="COG0055">
    <property type="taxonomic scope" value="Bacteria"/>
</dbReference>
<dbReference type="HOGENOM" id="CLU_022398_0_2_6"/>
<dbReference type="OrthoDB" id="9801639at2"/>
<dbReference type="Proteomes" id="UP000001981">
    <property type="component" value="Chromosome"/>
</dbReference>
<dbReference type="GO" id="GO:0005886">
    <property type="term" value="C:plasma membrane"/>
    <property type="evidence" value="ECO:0007669"/>
    <property type="project" value="UniProtKB-SubCell"/>
</dbReference>
<dbReference type="GO" id="GO:0045259">
    <property type="term" value="C:proton-transporting ATP synthase complex"/>
    <property type="evidence" value="ECO:0007669"/>
    <property type="project" value="UniProtKB-KW"/>
</dbReference>
<dbReference type="GO" id="GO:0005524">
    <property type="term" value="F:ATP binding"/>
    <property type="evidence" value="ECO:0007669"/>
    <property type="project" value="UniProtKB-UniRule"/>
</dbReference>
<dbReference type="GO" id="GO:0016887">
    <property type="term" value="F:ATP hydrolysis activity"/>
    <property type="evidence" value="ECO:0007669"/>
    <property type="project" value="InterPro"/>
</dbReference>
<dbReference type="GO" id="GO:0046933">
    <property type="term" value="F:proton-transporting ATP synthase activity, rotational mechanism"/>
    <property type="evidence" value="ECO:0007669"/>
    <property type="project" value="UniProtKB-UniRule"/>
</dbReference>
<dbReference type="GO" id="GO:0046961">
    <property type="term" value="F:proton-transporting ATPase activity, rotational mechanism"/>
    <property type="evidence" value="ECO:0007669"/>
    <property type="project" value="InterPro"/>
</dbReference>
<dbReference type="CDD" id="cd18110">
    <property type="entry name" value="ATP-synt_F1_beta_C"/>
    <property type="match status" value="1"/>
</dbReference>
<dbReference type="CDD" id="cd18115">
    <property type="entry name" value="ATP-synt_F1_beta_N"/>
    <property type="match status" value="1"/>
</dbReference>
<dbReference type="CDD" id="cd01133">
    <property type="entry name" value="F1-ATPase_beta_CD"/>
    <property type="match status" value="1"/>
</dbReference>
<dbReference type="FunFam" id="1.10.1140.10:FF:000006">
    <property type="entry name" value="ATP synthase subunit beta"/>
    <property type="match status" value="1"/>
</dbReference>
<dbReference type="FunFam" id="3.40.50.300:FF:001630">
    <property type="entry name" value="ATP synthase subunit beta"/>
    <property type="match status" value="1"/>
</dbReference>
<dbReference type="Gene3D" id="2.40.10.170">
    <property type="match status" value="1"/>
</dbReference>
<dbReference type="Gene3D" id="1.10.1140.10">
    <property type="entry name" value="Bovine Mitochondrial F1-atpase, Atp Synthase Beta Chain, Chain D, domain 3"/>
    <property type="match status" value="1"/>
</dbReference>
<dbReference type="Gene3D" id="3.40.50.300">
    <property type="entry name" value="P-loop containing nucleotide triphosphate hydrolases"/>
    <property type="match status" value="1"/>
</dbReference>
<dbReference type="HAMAP" id="MF_01347">
    <property type="entry name" value="ATP_synth_beta_bact"/>
    <property type="match status" value="1"/>
</dbReference>
<dbReference type="InterPro" id="IPR003593">
    <property type="entry name" value="AAA+_ATPase"/>
</dbReference>
<dbReference type="InterPro" id="IPR017691">
    <property type="entry name" value="Alt_ATPase_F1_bsu"/>
</dbReference>
<dbReference type="InterPro" id="IPR055190">
    <property type="entry name" value="ATP-synt_VA_C"/>
</dbReference>
<dbReference type="InterPro" id="IPR005722">
    <property type="entry name" value="ATP_synth_F1_bsu"/>
</dbReference>
<dbReference type="InterPro" id="IPR020003">
    <property type="entry name" value="ATPase_a/bsu_AS"/>
</dbReference>
<dbReference type="InterPro" id="IPR050053">
    <property type="entry name" value="ATPase_alpha/beta_chains"/>
</dbReference>
<dbReference type="InterPro" id="IPR004100">
    <property type="entry name" value="ATPase_F1/V1/A1_a/bsu_N"/>
</dbReference>
<dbReference type="InterPro" id="IPR036121">
    <property type="entry name" value="ATPase_F1/V1/A1_a/bsu_N_sf"/>
</dbReference>
<dbReference type="InterPro" id="IPR000194">
    <property type="entry name" value="ATPase_F1/V1/A1_a/bsu_nucl-bd"/>
</dbReference>
<dbReference type="InterPro" id="IPR024034">
    <property type="entry name" value="ATPase_F1/V1_b/a_C"/>
</dbReference>
<dbReference type="InterPro" id="IPR027417">
    <property type="entry name" value="P-loop_NTPase"/>
</dbReference>
<dbReference type="NCBIfam" id="TIGR03305">
    <property type="entry name" value="alt_F1F0_F1_bet"/>
    <property type="match status" value="1"/>
</dbReference>
<dbReference type="NCBIfam" id="TIGR01039">
    <property type="entry name" value="atpD"/>
    <property type="match status" value="1"/>
</dbReference>
<dbReference type="PANTHER" id="PTHR15184">
    <property type="entry name" value="ATP SYNTHASE"/>
    <property type="match status" value="1"/>
</dbReference>
<dbReference type="PANTHER" id="PTHR15184:SF71">
    <property type="entry name" value="ATP SYNTHASE SUBUNIT BETA, MITOCHONDRIAL"/>
    <property type="match status" value="1"/>
</dbReference>
<dbReference type="Pfam" id="PF00006">
    <property type="entry name" value="ATP-synt_ab"/>
    <property type="match status" value="1"/>
</dbReference>
<dbReference type="Pfam" id="PF02874">
    <property type="entry name" value="ATP-synt_ab_N"/>
    <property type="match status" value="1"/>
</dbReference>
<dbReference type="Pfam" id="PF22919">
    <property type="entry name" value="ATP-synt_VA_C"/>
    <property type="match status" value="1"/>
</dbReference>
<dbReference type="SMART" id="SM00382">
    <property type="entry name" value="AAA"/>
    <property type="match status" value="1"/>
</dbReference>
<dbReference type="SUPFAM" id="SSF47917">
    <property type="entry name" value="C-terminal domain of alpha and beta subunits of F1 ATP synthase"/>
    <property type="match status" value="1"/>
</dbReference>
<dbReference type="SUPFAM" id="SSF50615">
    <property type="entry name" value="N-terminal domain of alpha and beta subunits of F1 ATP synthase"/>
    <property type="match status" value="1"/>
</dbReference>
<dbReference type="SUPFAM" id="SSF52540">
    <property type="entry name" value="P-loop containing nucleoside triphosphate hydrolases"/>
    <property type="match status" value="1"/>
</dbReference>
<dbReference type="PROSITE" id="PS00152">
    <property type="entry name" value="ATPASE_ALPHA_BETA"/>
    <property type="match status" value="1"/>
</dbReference>